<protein>
    <recommendedName>
        <fullName evidence="1">Cytochrome c-type biogenesis protein CcmE</fullName>
    </recommendedName>
    <alternativeName>
        <fullName evidence="1">Cytochrome c maturation protein E</fullName>
    </alternativeName>
    <alternativeName>
        <fullName evidence="1">Heme chaperone CcmE</fullName>
    </alternativeName>
</protein>
<feature type="chain" id="PRO_1000070844" description="Cytochrome c-type biogenesis protein CcmE">
    <location>
        <begin position="1"/>
        <end position="137"/>
    </location>
</feature>
<feature type="topological domain" description="Cytoplasmic" evidence="1">
    <location>
        <begin position="1"/>
        <end position="8"/>
    </location>
</feature>
<feature type="transmembrane region" description="Helical; Signal-anchor for type II membrane protein" evidence="1">
    <location>
        <begin position="9"/>
        <end position="29"/>
    </location>
</feature>
<feature type="topological domain" description="Periplasmic" evidence="1">
    <location>
        <begin position="30"/>
        <end position="137"/>
    </location>
</feature>
<feature type="binding site" description="covalent" evidence="1">
    <location>
        <position position="120"/>
    </location>
    <ligand>
        <name>heme</name>
        <dbReference type="ChEBI" id="CHEBI:30413"/>
    </ligand>
</feature>
<feature type="binding site" description="axial binding residue" evidence="1">
    <location>
        <position position="124"/>
    </location>
    <ligand>
        <name>heme</name>
        <dbReference type="ChEBI" id="CHEBI:30413"/>
    </ligand>
    <ligandPart>
        <name>Fe</name>
        <dbReference type="ChEBI" id="CHEBI:18248"/>
    </ligandPart>
</feature>
<keyword id="KW-0997">Cell inner membrane</keyword>
<keyword id="KW-1003">Cell membrane</keyword>
<keyword id="KW-0201">Cytochrome c-type biogenesis</keyword>
<keyword id="KW-0349">Heme</keyword>
<keyword id="KW-0408">Iron</keyword>
<keyword id="KW-0472">Membrane</keyword>
<keyword id="KW-0479">Metal-binding</keyword>
<keyword id="KW-0735">Signal-anchor</keyword>
<keyword id="KW-0812">Transmembrane</keyword>
<keyword id="KW-1133">Transmembrane helix</keyword>
<reference key="1">
    <citation type="submission" date="2007-09" db="EMBL/GenBank/DDBJ databases">
        <title>Complete genome sequencing of Rickettsia bellii.</title>
        <authorList>
            <person name="Madan A."/>
            <person name="Lee H."/>
            <person name="Madan A."/>
            <person name="Yoon J.-G."/>
            <person name="Ryu G.-Y."/>
            <person name="Dasch G."/>
            <person name="Ereemeva M."/>
        </authorList>
    </citation>
    <scope>NUCLEOTIDE SEQUENCE [LARGE SCALE GENOMIC DNA]</scope>
    <source>
        <strain>OSU 85-389</strain>
    </source>
</reference>
<organism>
    <name type="scientific">Rickettsia bellii (strain OSU 85-389)</name>
    <dbReference type="NCBI Taxonomy" id="391896"/>
    <lineage>
        <taxon>Bacteria</taxon>
        <taxon>Pseudomonadati</taxon>
        <taxon>Pseudomonadota</taxon>
        <taxon>Alphaproteobacteria</taxon>
        <taxon>Rickettsiales</taxon>
        <taxon>Rickettsiaceae</taxon>
        <taxon>Rickettsieae</taxon>
        <taxon>Rickettsia</taxon>
        <taxon>belli group</taxon>
    </lineage>
</organism>
<name>CCME_RICB8</name>
<gene>
    <name evidence="1" type="primary">ccmE</name>
    <name evidence="1" type="synonym">cycJ</name>
    <name type="ordered locus">A1I_04580</name>
</gene>
<accession>A8GWM8</accession>
<comment type="function">
    <text evidence="1">Heme chaperone required for the biogenesis of c-type cytochromes. Transiently binds heme delivered by CcmC and transfers the heme to apo-cytochromes in a process facilitated by CcmF and CcmH.</text>
</comment>
<comment type="subcellular location">
    <subcellularLocation>
        <location evidence="1">Cell inner membrane</location>
        <topology evidence="1">Single-pass type II membrane protein</topology>
        <orientation evidence="1">Periplasmic side</orientation>
    </subcellularLocation>
</comment>
<comment type="similarity">
    <text evidence="1">Belongs to the CcmE/CycJ family.</text>
</comment>
<dbReference type="EMBL" id="CP000849">
    <property type="protein sequence ID" value="ABV79255.1"/>
    <property type="molecule type" value="Genomic_DNA"/>
</dbReference>
<dbReference type="RefSeq" id="WP_011477366.1">
    <property type="nucleotide sequence ID" value="NC_009883.1"/>
</dbReference>
<dbReference type="SMR" id="A8GWM8"/>
<dbReference type="KEGG" id="rbo:A1I_04580"/>
<dbReference type="HOGENOM" id="CLU_079503_1_1_5"/>
<dbReference type="GO" id="GO:0005886">
    <property type="term" value="C:plasma membrane"/>
    <property type="evidence" value="ECO:0007669"/>
    <property type="project" value="UniProtKB-SubCell"/>
</dbReference>
<dbReference type="GO" id="GO:0020037">
    <property type="term" value="F:heme binding"/>
    <property type="evidence" value="ECO:0007669"/>
    <property type="project" value="InterPro"/>
</dbReference>
<dbReference type="GO" id="GO:0046872">
    <property type="term" value="F:metal ion binding"/>
    <property type="evidence" value="ECO:0007669"/>
    <property type="project" value="UniProtKB-KW"/>
</dbReference>
<dbReference type="GO" id="GO:0017004">
    <property type="term" value="P:cytochrome complex assembly"/>
    <property type="evidence" value="ECO:0007669"/>
    <property type="project" value="UniProtKB-KW"/>
</dbReference>
<dbReference type="Gene3D" id="2.40.50.140">
    <property type="entry name" value="Nucleic acid-binding proteins"/>
    <property type="match status" value="1"/>
</dbReference>
<dbReference type="HAMAP" id="MF_01959">
    <property type="entry name" value="CcmE"/>
    <property type="match status" value="1"/>
</dbReference>
<dbReference type="InterPro" id="IPR004329">
    <property type="entry name" value="CcmE"/>
</dbReference>
<dbReference type="InterPro" id="IPR036127">
    <property type="entry name" value="CcmE-like_sf"/>
</dbReference>
<dbReference type="InterPro" id="IPR012340">
    <property type="entry name" value="NA-bd_OB-fold"/>
</dbReference>
<dbReference type="NCBIfam" id="NF009727">
    <property type="entry name" value="PRK13254.1-1"/>
    <property type="match status" value="1"/>
</dbReference>
<dbReference type="PANTHER" id="PTHR34128">
    <property type="entry name" value="CYTOCHROME C-TYPE BIOGENESIS PROTEIN CCME HOMOLOG, MITOCHONDRIAL"/>
    <property type="match status" value="1"/>
</dbReference>
<dbReference type="PANTHER" id="PTHR34128:SF2">
    <property type="entry name" value="CYTOCHROME C-TYPE BIOGENESIS PROTEIN CCME HOMOLOG, MITOCHONDRIAL"/>
    <property type="match status" value="1"/>
</dbReference>
<dbReference type="Pfam" id="PF03100">
    <property type="entry name" value="CcmE"/>
    <property type="match status" value="1"/>
</dbReference>
<dbReference type="SUPFAM" id="SSF82093">
    <property type="entry name" value="Heme chaperone CcmE"/>
    <property type="match status" value="1"/>
</dbReference>
<evidence type="ECO:0000255" key="1">
    <source>
        <dbReference type="HAMAP-Rule" id="MF_01959"/>
    </source>
</evidence>
<proteinExistence type="inferred from homology"/>
<sequence>MQKGAKNRLITIIICFCSAVIGVSIILYNLEKSIVFFVPPSKINEVEQGKELRVGGLVKVDSINKIAADKISFVITDNIKDLEIFYQGVLPALFRENQGIIAIGRLSNGKFIARELLAKHDENYRPPNTVIPAKAGI</sequence>